<reference key="1">
    <citation type="journal article" date="2004" name="Nature">
        <title>Genome evolution in yeasts.</title>
        <authorList>
            <person name="Dujon B."/>
            <person name="Sherman D."/>
            <person name="Fischer G."/>
            <person name="Durrens P."/>
            <person name="Casaregola S."/>
            <person name="Lafontaine I."/>
            <person name="de Montigny J."/>
            <person name="Marck C."/>
            <person name="Neuveglise C."/>
            <person name="Talla E."/>
            <person name="Goffard N."/>
            <person name="Frangeul L."/>
            <person name="Aigle M."/>
            <person name="Anthouard V."/>
            <person name="Babour A."/>
            <person name="Barbe V."/>
            <person name="Barnay S."/>
            <person name="Blanchin S."/>
            <person name="Beckerich J.-M."/>
            <person name="Beyne E."/>
            <person name="Bleykasten C."/>
            <person name="Boisrame A."/>
            <person name="Boyer J."/>
            <person name="Cattolico L."/>
            <person name="Confanioleri F."/>
            <person name="de Daruvar A."/>
            <person name="Despons L."/>
            <person name="Fabre E."/>
            <person name="Fairhead C."/>
            <person name="Ferry-Dumazet H."/>
            <person name="Groppi A."/>
            <person name="Hantraye F."/>
            <person name="Hennequin C."/>
            <person name="Jauniaux N."/>
            <person name="Joyet P."/>
            <person name="Kachouri R."/>
            <person name="Kerrest A."/>
            <person name="Koszul R."/>
            <person name="Lemaire M."/>
            <person name="Lesur I."/>
            <person name="Ma L."/>
            <person name="Muller H."/>
            <person name="Nicaud J.-M."/>
            <person name="Nikolski M."/>
            <person name="Oztas S."/>
            <person name="Ozier-Kalogeropoulos O."/>
            <person name="Pellenz S."/>
            <person name="Potier S."/>
            <person name="Richard G.-F."/>
            <person name="Straub M.-L."/>
            <person name="Suleau A."/>
            <person name="Swennen D."/>
            <person name="Tekaia F."/>
            <person name="Wesolowski-Louvel M."/>
            <person name="Westhof E."/>
            <person name="Wirth B."/>
            <person name="Zeniou-Meyer M."/>
            <person name="Zivanovic Y."/>
            <person name="Bolotin-Fukuhara M."/>
            <person name="Thierry A."/>
            <person name="Bouchier C."/>
            <person name="Caudron B."/>
            <person name="Scarpelli C."/>
            <person name="Gaillardin C."/>
            <person name="Weissenbach J."/>
            <person name="Wincker P."/>
            <person name="Souciet J.-L."/>
        </authorList>
    </citation>
    <scope>NUCLEOTIDE SEQUENCE [LARGE SCALE GENOMIC DNA]</scope>
    <source>
        <strain>ATCC 8585 / CBS 2359 / DSM 70799 / NBRC 1267 / NRRL Y-1140 / WM37</strain>
    </source>
</reference>
<proteinExistence type="inferred from homology"/>
<name>SYM1_KLULA</name>
<gene>
    <name type="primary">SYM1</name>
    <name type="ordered locus">KLLA0F22924g</name>
</gene>
<evidence type="ECO:0000250" key="1"/>
<evidence type="ECO:0000255" key="2"/>
<evidence type="ECO:0000305" key="3"/>
<organism>
    <name type="scientific">Kluyveromyces lactis (strain ATCC 8585 / CBS 2359 / DSM 70799 / NBRC 1267 / NRRL Y-1140 / WM37)</name>
    <name type="common">Yeast</name>
    <name type="synonym">Candida sphaerica</name>
    <dbReference type="NCBI Taxonomy" id="284590"/>
    <lineage>
        <taxon>Eukaryota</taxon>
        <taxon>Fungi</taxon>
        <taxon>Dikarya</taxon>
        <taxon>Ascomycota</taxon>
        <taxon>Saccharomycotina</taxon>
        <taxon>Saccharomycetes</taxon>
        <taxon>Saccharomycetales</taxon>
        <taxon>Saccharomycetaceae</taxon>
        <taxon>Kluyveromyces</taxon>
    </lineage>
</organism>
<protein>
    <recommendedName>
        <fullName>Protein SYM1</fullName>
    </recommendedName>
</protein>
<sequence length="195" mass="22045">MNGFVNWYTASVKRSPRLTNGIMTGSLFGIGDVIAQVGFPEKKGQKYDLARTVRAVVYGSLIFSIIGDSWYKFLNQKVIVKPGKHWTNTAARVGCDQLLFAPVGIPMYYGVMSILEGKSLVDAKKKIEDNWWPTLVTNWYVWPAFQLINFSLVPVHHRLFSVNIISIFWNAFLSFKNSISPSDKKVPVNFPPVPE</sequence>
<accession>Q6CIY7</accession>
<dbReference type="EMBL" id="CR382126">
    <property type="protein sequence ID" value="CAG98810.1"/>
    <property type="molecule type" value="Genomic_DNA"/>
</dbReference>
<dbReference type="RefSeq" id="XP_456102.1">
    <property type="nucleotide sequence ID" value="XM_456102.1"/>
</dbReference>
<dbReference type="FunCoup" id="Q6CIY7">
    <property type="interactions" value="608"/>
</dbReference>
<dbReference type="STRING" id="284590.Q6CIY7"/>
<dbReference type="PaxDb" id="284590-Q6CIY7"/>
<dbReference type="KEGG" id="kla:KLLA0_F22924g"/>
<dbReference type="eggNOG" id="KOG1944">
    <property type="taxonomic scope" value="Eukaryota"/>
</dbReference>
<dbReference type="HOGENOM" id="CLU_049109_8_1_1"/>
<dbReference type="InParanoid" id="Q6CIY7"/>
<dbReference type="OMA" id="WYQSKLA"/>
<dbReference type="Proteomes" id="UP000000598">
    <property type="component" value="Chromosome F"/>
</dbReference>
<dbReference type="GO" id="GO:0005743">
    <property type="term" value="C:mitochondrial inner membrane"/>
    <property type="evidence" value="ECO:0007669"/>
    <property type="project" value="UniProtKB-SubCell"/>
</dbReference>
<dbReference type="InterPro" id="IPR007248">
    <property type="entry name" value="Mpv17_PMP22"/>
</dbReference>
<dbReference type="PANTHER" id="PTHR11266">
    <property type="entry name" value="PEROXISOMAL MEMBRANE PROTEIN 2, PXMP2 MPV17"/>
    <property type="match status" value="1"/>
</dbReference>
<dbReference type="PANTHER" id="PTHR11266:SF17">
    <property type="entry name" value="PROTEIN MPV17"/>
    <property type="match status" value="1"/>
</dbReference>
<dbReference type="Pfam" id="PF04117">
    <property type="entry name" value="Mpv17_PMP22"/>
    <property type="match status" value="1"/>
</dbReference>
<feature type="chain" id="PRO_0000234413" description="Protein SYM1">
    <location>
        <begin position="1"/>
        <end position="195"/>
    </location>
</feature>
<feature type="transmembrane region" description="Helical" evidence="2">
    <location>
        <begin position="21"/>
        <end position="39"/>
    </location>
</feature>
<feature type="transmembrane region" description="Helical" evidence="2">
    <location>
        <begin position="55"/>
        <end position="71"/>
    </location>
</feature>
<feature type="transmembrane region" description="Helical" evidence="2">
    <location>
        <begin position="98"/>
        <end position="115"/>
    </location>
</feature>
<feature type="transmembrane region" description="Helical" evidence="2">
    <location>
        <begin position="159"/>
        <end position="175"/>
    </location>
</feature>
<comment type="function">
    <text evidence="1">May be involved in cellular response to stress. Required to maintain mitochondrial DNA (mtDNA) integrity and stability (By similarity).</text>
</comment>
<comment type="subcellular location">
    <subcellularLocation>
        <location evidence="1">Mitochondrion inner membrane</location>
        <topology evidence="1">Multi-pass membrane protein</topology>
    </subcellularLocation>
</comment>
<comment type="similarity">
    <text evidence="3">Belongs to the peroxisomal membrane protein PXMP2/4 family.</text>
</comment>
<keyword id="KW-0472">Membrane</keyword>
<keyword id="KW-0496">Mitochondrion</keyword>
<keyword id="KW-0999">Mitochondrion inner membrane</keyword>
<keyword id="KW-1185">Reference proteome</keyword>
<keyword id="KW-0812">Transmembrane</keyword>
<keyword id="KW-1133">Transmembrane helix</keyword>